<gene>
    <name evidence="1" type="primary">rpmJ</name>
    <name type="ordered locus">HPAG1_1242</name>
</gene>
<accession>Q1CRW3</accession>
<evidence type="ECO:0000255" key="1">
    <source>
        <dbReference type="HAMAP-Rule" id="MF_00251"/>
    </source>
</evidence>
<evidence type="ECO:0000305" key="2"/>
<organism>
    <name type="scientific">Helicobacter pylori (strain HPAG1)</name>
    <dbReference type="NCBI Taxonomy" id="357544"/>
    <lineage>
        <taxon>Bacteria</taxon>
        <taxon>Pseudomonadati</taxon>
        <taxon>Campylobacterota</taxon>
        <taxon>Epsilonproteobacteria</taxon>
        <taxon>Campylobacterales</taxon>
        <taxon>Helicobacteraceae</taxon>
        <taxon>Helicobacter</taxon>
    </lineage>
</organism>
<sequence>MKVRPSVKKMCDKCKIIKRRGVIRVICATPKHKQRQG</sequence>
<feature type="chain" id="PRO_0000302216" description="Large ribosomal subunit protein bL36">
    <location>
        <begin position="1"/>
        <end position="37"/>
    </location>
</feature>
<name>RL36_HELPH</name>
<dbReference type="EMBL" id="CP000241">
    <property type="protein sequence ID" value="ABF85309.1"/>
    <property type="molecule type" value="Genomic_DNA"/>
</dbReference>
<dbReference type="RefSeq" id="WP_000868339.1">
    <property type="nucleotide sequence ID" value="NC_008086.1"/>
</dbReference>
<dbReference type="SMR" id="Q1CRW3"/>
<dbReference type="GeneID" id="31757687"/>
<dbReference type="KEGG" id="hpa:HPAG1_1242"/>
<dbReference type="HOGENOM" id="CLU_135723_6_2_7"/>
<dbReference type="GO" id="GO:0005737">
    <property type="term" value="C:cytoplasm"/>
    <property type="evidence" value="ECO:0007669"/>
    <property type="project" value="UniProtKB-ARBA"/>
</dbReference>
<dbReference type="GO" id="GO:1990904">
    <property type="term" value="C:ribonucleoprotein complex"/>
    <property type="evidence" value="ECO:0007669"/>
    <property type="project" value="UniProtKB-KW"/>
</dbReference>
<dbReference type="GO" id="GO:0005840">
    <property type="term" value="C:ribosome"/>
    <property type="evidence" value="ECO:0007669"/>
    <property type="project" value="UniProtKB-KW"/>
</dbReference>
<dbReference type="GO" id="GO:0003735">
    <property type="term" value="F:structural constituent of ribosome"/>
    <property type="evidence" value="ECO:0007669"/>
    <property type="project" value="InterPro"/>
</dbReference>
<dbReference type="GO" id="GO:0006412">
    <property type="term" value="P:translation"/>
    <property type="evidence" value="ECO:0007669"/>
    <property type="project" value="UniProtKB-UniRule"/>
</dbReference>
<dbReference type="HAMAP" id="MF_00251">
    <property type="entry name" value="Ribosomal_bL36"/>
    <property type="match status" value="1"/>
</dbReference>
<dbReference type="InterPro" id="IPR000473">
    <property type="entry name" value="Ribosomal_bL36"/>
</dbReference>
<dbReference type="InterPro" id="IPR035977">
    <property type="entry name" value="Ribosomal_bL36_sp"/>
</dbReference>
<dbReference type="NCBIfam" id="TIGR01022">
    <property type="entry name" value="rpmJ_bact"/>
    <property type="match status" value="1"/>
</dbReference>
<dbReference type="PANTHER" id="PTHR42888">
    <property type="entry name" value="50S RIBOSOMAL PROTEIN L36, CHLOROPLASTIC"/>
    <property type="match status" value="1"/>
</dbReference>
<dbReference type="PANTHER" id="PTHR42888:SF1">
    <property type="entry name" value="LARGE RIBOSOMAL SUBUNIT PROTEIN BL36C"/>
    <property type="match status" value="1"/>
</dbReference>
<dbReference type="Pfam" id="PF00444">
    <property type="entry name" value="Ribosomal_L36"/>
    <property type="match status" value="1"/>
</dbReference>
<dbReference type="SUPFAM" id="SSF57840">
    <property type="entry name" value="Ribosomal protein L36"/>
    <property type="match status" value="1"/>
</dbReference>
<dbReference type="PROSITE" id="PS00828">
    <property type="entry name" value="RIBOSOMAL_L36"/>
    <property type="match status" value="1"/>
</dbReference>
<keyword id="KW-0687">Ribonucleoprotein</keyword>
<keyword id="KW-0689">Ribosomal protein</keyword>
<comment type="similarity">
    <text evidence="1">Belongs to the bacterial ribosomal protein bL36 family.</text>
</comment>
<protein>
    <recommendedName>
        <fullName evidence="1">Large ribosomal subunit protein bL36</fullName>
    </recommendedName>
    <alternativeName>
        <fullName evidence="2">50S ribosomal protein L36</fullName>
    </alternativeName>
</protein>
<proteinExistence type="inferred from homology"/>
<reference key="1">
    <citation type="journal article" date="2006" name="Proc. Natl. Acad. Sci. U.S.A.">
        <title>The complete genome sequence of a chronic atrophic gastritis Helicobacter pylori strain: evolution during disease progression.</title>
        <authorList>
            <person name="Oh J.D."/>
            <person name="Kling-Baeckhed H."/>
            <person name="Giannakis M."/>
            <person name="Xu J."/>
            <person name="Fulton R.S."/>
            <person name="Fulton L.A."/>
            <person name="Cordum H.S."/>
            <person name="Wang C."/>
            <person name="Elliott G."/>
            <person name="Edwards J."/>
            <person name="Mardis E.R."/>
            <person name="Engstrand L.G."/>
            <person name="Gordon J.I."/>
        </authorList>
    </citation>
    <scope>NUCLEOTIDE SEQUENCE [LARGE SCALE GENOMIC DNA]</scope>
    <source>
        <strain>HPAG1</strain>
    </source>
</reference>